<feature type="chain" id="PRO_0000346061" description="Protoheme IX farnesyltransferase">
    <location>
        <begin position="1"/>
        <end position="313"/>
    </location>
</feature>
<feature type="transmembrane region" description="Helical" evidence="1">
    <location>
        <begin position="34"/>
        <end position="54"/>
    </location>
</feature>
<feature type="transmembrane region" description="Helical" evidence="1">
    <location>
        <begin position="56"/>
        <end position="76"/>
    </location>
</feature>
<feature type="transmembrane region" description="Helical" evidence="1">
    <location>
        <begin position="105"/>
        <end position="125"/>
    </location>
</feature>
<feature type="transmembrane region" description="Helical" evidence="1">
    <location>
        <begin position="128"/>
        <end position="148"/>
    </location>
</feature>
<feature type="transmembrane region" description="Helical" evidence="1">
    <location>
        <begin position="152"/>
        <end position="172"/>
    </location>
</feature>
<feature type="transmembrane region" description="Helical" evidence="1">
    <location>
        <begin position="173"/>
        <end position="193"/>
    </location>
</feature>
<feature type="transmembrane region" description="Helical" evidence="1">
    <location>
        <begin position="237"/>
        <end position="257"/>
    </location>
</feature>
<feature type="transmembrane region" description="Helical" evidence="1">
    <location>
        <begin position="291"/>
        <end position="311"/>
    </location>
</feature>
<gene>
    <name evidence="1" type="primary">ctaB</name>
    <name type="ordered locus">Mflv_3691</name>
</gene>
<protein>
    <recommendedName>
        <fullName evidence="1">Protoheme IX farnesyltransferase</fullName>
        <ecNumber evidence="1">2.5.1.141</ecNumber>
    </recommendedName>
    <alternativeName>
        <fullName evidence="1">Heme B farnesyltransferase</fullName>
    </alternativeName>
    <alternativeName>
        <fullName evidence="1">Heme O synthase</fullName>
    </alternativeName>
</protein>
<accession>A4TC38</accession>
<proteinExistence type="inferred from homology"/>
<dbReference type="EC" id="2.5.1.141" evidence="1"/>
<dbReference type="EMBL" id="CP000656">
    <property type="protein sequence ID" value="ABP46165.1"/>
    <property type="molecule type" value="Genomic_DNA"/>
</dbReference>
<dbReference type="SMR" id="A4TC38"/>
<dbReference type="STRING" id="350054.Mflv_3691"/>
<dbReference type="KEGG" id="mgi:Mflv_3691"/>
<dbReference type="eggNOG" id="COG0109">
    <property type="taxonomic scope" value="Bacteria"/>
</dbReference>
<dbReference type="HOGENOM" id="CLU_029631_0_1_11"/>
<dbReference type="OrthoDB" id="9814417at2"/>
<dbReference type="UniPathway" id="UPA00834">
    <property type="reaction ID" value="UER00712"/>
</dbReference>
<dbReference type="GO" id="GO:0005886">
    <property type="term" value="C:plasma membrane"/>
    <property type="evidence" value="ECO:0007669"/>
    <property type="project" value="UniProtKB-SubCell"/>
</dbReference>
<dbReference type="GO" id="GO:0008495">
    <property type="term" value="F:protoheme IX farnesyltransferase activity"/>
    <property type="evidence" value="ECO:0007669"/>
    <property type="project" value="UniProtKB-UniRule"/>
</dbReference>
<dbReference type="GO" id="GO:0048034">
    <property type="term" value="P:heme O biosynthetic process"/>
    <property type="evidence" value="ECO:0007669"/>
    <property type="project" value="UniProtKB-UniRule"/>
</dbReference>
<dbReference type="CDD" id="cd13957">
    <property type="entry name" value="PT_UbiA_Cox10"/>
    <property type="match status" value="1"/>
</dbReference>
<dbReference type="FunFam" id="1.10.357.140:FF:000001">
    <property type="entry name" value="Protoheme IX farnesyltransferase"/>
    <property type="match status" value="1"/>
</dbReference>
<dbReference type="Gene3D" id="1.10.357.140">
    <property type="entry name" value="UbiA prenyltransferase"/>
    <property type="match status" value="1"/>
</dbReference>
<dbReference type="HAMAP" id="MF_00154">
    <property type="entry name" value="CyoE_CtaB"/>
    <property type="match status" value="1"/>
</dbReference>
<dbReference type="InterPro" id="IPR006369">
    <property type="entry name" value="Protohaem_IX_farnesylTrfase"/>
</dbReference>
<dbReference type="InterPro" id="IPR000537">
    <property type="entry name" value="UbiA_prenyltransferase"/>
</dbReference>
<dbReference type="InterPro" id="IPR044878">
    <property type="entry name" value="UbiA_sf"/>
</dbReference>
<dbReference type="NCBIfam" id="TIGR01473">
    <property type="entry name" value="cyoE_ctaB"/>
    <property type="match status" value="1"/>
</dbReference>
<dbReference type="NCBIfam" id="NF003349">
    <property type="entry name" value="PRK04375.1-2"/>
    <property type="match status" value="1"/>
</dbReference>
<dbReference type="PANTHER" id="PTHR43448:SF7">
    <property type="entry name" value="4-HYDROXYBENZOATE SOLANESYLTRANSFERASE"/>
    <property type="match status" value="1"/>
</dbReference>
<dbReference type="PANTHER" id="PTHR43448">
    <property type="entry name" value="PROTOHEME IX FARNESYLTRANSFERASE, MITOCHONDRIAL"/>
    <property type="match status" value="1"/>
</dbReference>
<dbReference type="Pfam" id="PF01040">
    <property type="entry name" value="UbiA"/>
    <property type="match status" value="1"/>
</dbReference>
<sequence>MRIREGHLINDSAEGPIGLRTRLMGYIGLTKPRVIELLLVTTIPAMLLADRGTVDPLLIINTLVGGLLAAAGANTLNCVADADIDKKMKRTERRALARATVPRSHALIFGLTLSVASFFWLWSTTNMLSAHLAGATIAFYVLVYTLLLKRRTSQNVVWGGAAGCMPVMIGWSAVTGTIQWPALVMFLIIFFWTPPHTWALAMRYKEDYEAAGVPMLPVVATEQQVTKQILVYTWLTVLATLALALTTGWLYASVAILAGTWFLVMAHQLYAGVKRGEAVKPLRLFLQSNNYLAVVFVALAVDSALALPTLLHV</sequence>
<reference key="1">
    <citation type="submission" date="2007-04" db="EMBL/GenBank/DDBJ databases">
        <title>Complete sequence of chromosome of Mycobacterium gilvum PYR-GCK.</title>
        <authorList>
            <consortium name="US DOE Joint Genome Institute"/>
            <person name="Copeland A."/>
            <person name="Lucas S."/>
            <person name="Lapidus A."/>
            <person name="Barry K."/>
            <person name="Detter J.C."/>
            <person name="Glavina del Rio T."/>
            <person name="Hammon N."/>
            <person name="Israni S."/>
            <person name="Dalin E."/>
            <person name="Tice H."/>
            <person name="Pitluck S."/>
            <person name="Chain P."/>
            <person name="Malfatti S."/>
            <person name="Shin M."/>
            <person name="Vergez L."/>
            <person name="Schmutz J."/>
            <person name="Larimer F."/>
            <person name="Land M."/>
            <person name="Hauser L."/>
            <person name="Kyrpides N."/>
            <person name="Mikhailova N."/>
            <person name="Miller C."/>
            <person name="Richardson P."/>
        </authorList>
    </citation>
    <scope>NUCLEOTIDE SEQUENCE [LARGE SCALE GENOMIC DNA]</scope>
    <source>
        <strain>PYR-GCK</strain>
    </source>
</reference>
<name>COXX_MYCGI</name>
<organism>
    <name type="scientific">Mycolicibacterium gilvum (strain PYR-GCK)</name>
    <name type="common">Mycobacterium gilvum (strain PYR-GCK)</name>
    <dbReference type="NCBI Taxonomy" id="350054"/>
    <lineage>
        <taxon>Bacteria</taxon>
        <taxon>Bacillati</taxon>
        <taxon>Actinomycetota</taxon>
        <taxon>Actinomycetes</taxon>
        <taxon>Mycobacteriales</taxon>
        <taxon>Mycobacteriaceae</taxon>
        <taxon>Mycolicibacterium</taxon>
    </lineage>
</organism>
<evidence type="ECO:0000255" key="1">
    <source>
        <dbReference type="HAMAP-Rule" id="MF_00154"/>
    </source>
</evidence>
<keyword id="KW-1003">Cell membrane</keyword>
<keyword id="KW-0350">Heme biosynthesis</keyword>
<keyword id="KW-0472">Membrane</keyword>
<keyword id="KW-0808">Transferase</keyword>
<keyword id="KW-0812">Transmembrane</keyword>
<keyword id="KW-1133">Transmembrane helix</keyword>
<comment type="function">
    <text evidence="1">Converts heme B (protoheme IX) to heme O by substitution of the vinyl group on carbon 2 of heme B porphyrin ring with a hydroxyethyl farnesyl side group.</text>
</comment>
<comment type="catalytic activity">
    <reaction evidence="1">
        <text>heme b + (2E,6E)-farnesyl diphosphate + H2O = Fe(II)-heme o + diphosphate</text>
        <dbReference type="Rhea" id="RHEA:28070"/>
        <dbReference type="ChEBI" id="CHEBI:15377"/>
        <dbReference type="ChEBI" id="CHEBI:33019"/>
        <dbReference type="ChEBI" id="CHEBI:60344"/>
        <dbReference type="ChEBI" id="CHEBI:60530"/>
        <dbReference type="ChEBI" id="CHEBI:175763"/>
        <dbReference type="EC" id="2.5.1.141"/>
    </reaction>
</comment>
<comment type="pathway">
    <text evidence="1">Porphyrin-containing compound metabolism; heme O biosynthesis; heme O from protoheme: step 1/1.</text>
</comment>
<comment type="subcellular location">
    <subcellularLocation>
        <location evidence="1">Cell membrane</location>
        <topology evidence="1">Multi-pass membrane protein</topology>
    </subcellularLocation>
</comment>
<comment type="miscellaneous">
    <text evidence="1">Carbon 2 of the heme B porphyrin ring is defined according to the Fischer nomenclature.</text>
</comment>
<comment type="similarity">
    <text evidence="1">Belongs to the UbiA prenyltransferase family. Protoheme IX farnesyltransferase subfamily.</text>
</comment>